<feature type="chain" id="PRO_0000254664" description="Cytochrome b">
    <location>
        <begin position="1"/>
        <end position="379"/>
    </location>
</feature>
<feature type="transmembrane region" description="Helical" evidence="2">
    <location>
        <begin position="33"/>
        <end position="53"/>
    </location>
</feature>
<feature type="transmembrane region" description="Helical" evidence="2">
    <location>
        <begin position="77"/>
        <end position="98"/>
    </location>
</feature>
<feature type="transmembrane region" description="Helical" evidence="2">
    <location>
        <begin position="113"/>
        <end position="133"/>
    </location>
</feature>
<feature type="transmembrane region" description="Helical" evidence="2">
    <location>
        <begin position="178"/>
        <end position="198"/>
    </location>
</feature>
<feature type="transmembrane region" description="Helical" evidence="2">
    <location>
        <begin position="226"/>
        <end position="246"/>
    </location>
</feature>
<feature type="transmembrane region" description="Helical" evidence="2">
    <location>
        <begin position="288"/>
        <end position="308"/>
    </location>
</feature>
<feature type="transmembrane region" description="Helical" evidence="2">
    <location>
        <begin position="320"/>
        <end position="340"/>
    </location>
</feature>
<feature type="transmembrane region" description="Helical" evidence="2">
    <location>
        <begin position="347"/>
        <end position="367"/>
    </location>
</feature>
<feature type="binding site" description="axial binding residue" evidence="2">
    <location>
        <position position="83"/>
    </location>
    <ligand>
        <name>heme b</name>
        <dbReference type="ChEBI" id="CHEBI:60344"/>
        <label>b562</label>
    </ligand>
    <ligandPart>
        <name>Fe</name>
        <dbReference type="ChEBI" id="CHEBI:18248"/>
    </ligandPart>
</feature>
<feature type="binding site" description="axial binding residue" evidence="2">
    <location>
        <position position="97"/>
    </location>
    <ligand>
        <name>heme b</name>
        <dbReference type="ChEBI" id="CHEBI:60344"/>
        <label>b566</label>
    </ligand>
    <ligandPart>
        <name>Fe</name>
        <dbReference type="ChEBI" id="CHEBI:18248"/>
    </ligandPart>
</feature>
<feature type="binding site" description="axial binding residue" evidence="2">
    <location>
        <position position="182"/>
    </location>
    <ligand>
        <name>heme b</name>
        <dbReference type="ChEBI" id="CHEBI:60344"/>
        <label>b562</label>
    </ligand>
    <ligandPart>
        <name>Fe</name>
        <dbReference type="ChEBI" id="CHEBI:18248"/>
    </ligandPart>
</feature>
<feature type="binding site" description="axial binding residue" evidence="2">
    <location>
        <position position="196"/>
    </location>
    <ligand>
        <name>heme b</name>
        <dbReference type="ChEBI" id="CHEBI:60344"/>
        <label>b566</label>
    </ligand>
    <ligandPart>
        <name>Fe</name>
        <dbReference type="ChEBI" id="CHEBI:18248"/>
    </ligandPart>
</feature>
<feature type="binding site" evidence="2">
    <location>
        <position position="201"/>
    </location>
    <ligand>
        <name>a ubiquinone</name>
        <dbReference type="ChEBI" id="CHEBI:16389"/>
    </ligand>
</feature>
<geneLocation type="mitochondrion"/>
<dbReference type="EMBL" id="AB175144">
    <property type="protein sequence ID" value="BAE92709.1"/>
    <property type="molecule type" value="Genomic_DNA"/>
</dbReference>
<dbReference type="SMR" id="Q1XII7"/>
<dbReference type="GO" id="GO:0005743">
    <property type="term" value="C:mitochondrial inner membrane"/>
    <property type="evidence" value="ECO:0007669"/>
    <property type="project" value="UniProtKB-SubCell"/>
</dbReference>
<dbReference type="GO" id="GO:0045275">
    <property type="term" value="C:respiratory chain complex III"/>
    <property type="evidence" value="ECO:0007669"/>
    <property type="project" value="InterPro"/>
</dbReference>
<dbReference type="GO" id="GO:0046872">
    <property type="term" value="F:metal ion binding"/>
    <property type="evidence" value="ECO:0007669"/>
    <property type="project" value="UniProtKB-KW"/>
</dbReference>
<dbReference type="GO" id="GO:0008121">
    <property type="term" value="F:ubiquinol-cytochrome-c reductase activity"/>
    <property type="evidence" value="ECO:0007669"/>
    <property type="project" value="InterPro"/>
</dbReference>
<dbReference type="GO" id="GO:0006122">
    <property type="term" value="P:mitochondrial electron transport, ubiquinol to cytochrome c"/>
    <property type="evidence" value="ECO:0007669"/>
    <property type="project" value="TreeGrafter"/>
</dbReference>
<dbReference type="CDD" id="cd00290">
    <property type="entry name" value="cytochrome_b_C"/>
    <property type="match status" value="1"/>
</dbReference>
<dbReference type="CDD" id="cd00284">
    <property type="entry name" value="Cytochrome_b_N"/>
    <property type="match status" value="1"/>
</dbReference>
<dbReference type="FunFam" id="1.20.810.10:FF:000002">
    <property type="entry name" value="Cytochrome b"/>
    <property type="match status" value="1"/>
</dbReference>
<dbReference type="Gene3D" id="1.20.810.10">
    <property type="entry name" value="Cytochrome Bc1 Complex, Chain C"/>
    <property type="match status" value="1"/>
</dbReference>
<dbReference type="InterPro" id="IPR005798">
    <property type="entry name" value="Cyt_b/b6_C"/>
</dbReference>
<dbReference type="InterPro" id="IPR036150">
    <property type="entry name" value="Cyt_b/b6_C_sf"/>
</dbReference>
<dbReference type="InterPro" id="IPR005797">
    <property type="entry name" value="Cyt_b/b6_N"/>
</dbReference>
<dbReference type="InterPro" id="IPR027387">
    <property type="entry name" value="Cytb/b6-like_sf"/>
</dbReference>
<dbReference type="InterPro" id="IPR030689">
    <property type="entry name" value="Cytochrome_b"/>
</dbReference>
<dbReference type="InterPro" id="IPR048260">
    <property type="entry name" value="Cytochrome_b_C_euk/bac"/>
</dbReference>
<dbReference type="InterPro" id="IPR048259">
    <property type="entry name" value="Cytochrome_b_N_euk/bac"/>
</dbReference>
<dbReference type="InterPro" id="IPR016174">
    <property type="entry name" value="Di-haem_cyt_TM"/>
</dbReference>
<dbReference type="PANTHER" id="PTHR19271">
    <property type="entry name" value="CYTOCHROME B"/>
    <property type="match status" value="1"/>
</dbReference>
<dbReference type="PANTHER" id="PTHR19271:SF16">
    <property type="entry name" value="CYTOCHROME B"/>
    <property type="match status" value="1"/>
</dbReference>
<dbReference type="Pfam" id="PF00032">
    <property type="entry name" value="Cytochrom_B_C"/>
    <property type="match status" value="1"/>
</dbReference>
<dbReference type="Pfam" id="PF00033">
    <property type="entry name" value="Cytochrome_B"/>
    <property type="match status" value="1"/>
</dbReference>
<dbReference type="PIRSF" id="PIRSF038885">
    <property type="entry name" value="COB"/>
    <property type="match status" value="1"/>
</dbReference>
<dbReference type="SUPFAM" id="SSF81648">
    <property type="entry name" value="a domain/subunit of cytochrome bc1 complex (Ubiquinol-cytochrome c reductase)"/>
    <property type="match status" value="1"/>
</dbReference>
<dbReference type="SUPFAM" id="SSF81342">
    <property type="entry name" value="Transmembrane di-heme cytochromes"/>
    <property type="match status" value="1"/>
</dbReference>
<dbReference type="PROSITE" id="PS51003">
    <property type="entry name" value="CYTB_CTER"/>
    <property type="match status" value="1"/>
</dbReference>
<dbReference type="PROSITE" id="PS51002">
    <property type="entry name" value="CYTB_NTER"/>
    <property type="match status" value="1"/>
</dbReference>
<reference key="1">
    <citation type="submission" date="2004-03" db="EMBL/GenBank/DDBJ databases">
        <title>Molecular phylogenetics of the Soricidae (Insectivora, Mammalia) based on mitochondrial cytochrome b gene sequences.</title>
        <authorList>
            <person name="Ohdachi S.D."/>
            <person name="Iwasa M.A."/>
            <person name="Abe H."/>
            <person name="Vogel P."/>
            <person name="Oshida T."/>
            <person name="Lin L.K."/>
            <person name="Hasegawa M."/>
        </authorList>
    </citation>
    <scope>NUCLEOTIDE SEQUENCE [GENOMIC DNA]</scope>
</reference>
<organism>
    <name type="scientific">Parablarinella griselda</name>
    <name type="common">Indochinese short-tailed shrew</name>
    <name type="synonym">Pantherina griselda</name>
    <dbReference type="NCBI Taxonomy" id="3370481"/>
    <lineage>
        <taxon>Eukaryota</taxon>
        <taxon>Metazoa</taxon>
        <taxon>Chordata</taxon>
        <taxon>Craniata</taxon>
        <taxon>Vertebrata</taxon>
        <taxon>Euteleostomi</taxon>
        <taxon>Mammalia</taxon>
        <taxon>Eutheria</taxon>
        <taxon>Laurasiatheria</taxon>
        <taxon>Eulipotyphla</taxon>
        <taxon>Soricidae</taxon>
        <taxon>Soricinae</taxon>
        <taxon>Parablarinella</taxon>
    </lineage>
</organism>
<sequence length="379" mass="42650">MTNIRKTHPLMKIINSSFIDLPAPSNISSWWNFGSLLGVCLIIQILTGLFLAMHYTSDTMTAFSSVTHICRDVNYGWLIRYLHANGASMFFICLFLHVGRGLYYGSYMFLETWNIGVLLLFAVMATAFMGYVLPWGQMSFWGATVITNLLSAIPYIGSDLVQWIWGGFSVDKATLTRFFAFHFILPFIIAALAGVHLLFLHETGSNNPSGLSSDADKIPFHPYYTIKDILGVLLLILVLTSLVLFSPDLLGDPDNYTPANPLNTPPHIKPEWYFLFAYAILRSIPNKLGGVLALVLSILILAFIPLLHTSKQRSMMFRPFSQCLFWILVADLITLTWIGGQPVEHPFIIIGQLASILYFLLILVIMPITSLFENNLLKW</sequence>
<gene>
    <name type="primary">MT-CYB</name>
    <name type="synonym">COB</name>
    <name type="synonym">CYTB</name>
    <name type="synonym">MTCYB</name>
</gene>
<keyword id="KW-0249">Electron transport</keyword>
<keyword id="KW-0349">Heme</keyword>
<keyword id="KW-0408">Iron</keyword>
<keyword id="KW-0472">Membrane</keyword>
<keyword id="KW-0479">Metal-binding</keyword>
<keyword id="KW-0496">Mitochondrion</keyword>
<keyword id="KW-0999">Mitochondrion inner membrane</keyword>
<keyword id="KW-0679">Respiratory chain</keyword>
<keyword id="KW-0812">Transmembrane</keyword>
<keyword id="KW-1133">Transmembrane helix</keyword>
<keyword id="KW-0813">Transport</keyword>
<keyword id="KW-0830">Ubiquinone</keyword>
<accession>Q1XII7</accession>
<name>CYB_PARGS</name>
<evidence type="ECO:0000250" key="1"/>
<evidence type="ECO:0000250" key="2">
    <source>
        <dbReference type="UniProtKB" id="P00157"/>
    </source>
</evidence>
<evidence type="ECO:0000255" key="3">
    <source>
        <dbReference type="PROSITE-ProRule" id="PRU00967"/>
    </source>
</evidence>
<evidence type="ECO:0000255" key="4">
    <source>
        <dbReference type="PROSITE-ProRule" id="PRU00968"/>
    </source>
</evidence>
<proteinExistence type="inferred from homology"/>
<protein>
    <recommendedName>
        <fullName>Cytochrome b</fullName>
    </recommendedName>
    <alternativeName>
        <fullName>Complex III subunit 3</fullName>
    </alternativeName>
    <alternativeName>
        <fullName>Complex III subunit III</fullName>
    </alternativeName>
    <alternativeName>
        <fullName>Cytochrome b-c1 complex subunit 3</fullName>
    </alternativeName>
    <alternativeName>
        <fullName>Ubiquinol-cytochrome-c reductase complex cytochrome b subunit</fullName>
    </alternativeName>
</protein>
<comment type="function">
    <text evidence="2">Component of the ubiquinol-cytochrome c reductase complex (complex III or cytochrome b-c1 complex) that is part of the mitochondrial respiratory chain. The b-c1 complex mediates electron transfer from ubiquinol to cytochrome c. Contributes to the generation of a proton gradient across the mitochondrial membrane that is then used for ATP synthesis.</text>
</comment>
<comment type="cofactor">
    <cofactor evidence="2">
        <name>heme b</name>
        <dbReference type="ChEBI" id="CHEBI:60344"/>
    </cofactor>
    <text evidence="2">Binds 2 heme b groups non-covalently.</text>
</comment>
<comment type="subunit">
    <text evidence="2">The cytochrome bc1 complex contains 11 subunits: 3 respiratory subunits (MT-CYB, CYC1 and UQCRFS1), 2 core proteins (UQCRC1 and UQCRC2) and 6 low-molecular weight proteins (UQCRH/QCR6, UQCRB/QCR7, UQCRQ/QCR8, UQCR10/QCR9, UQCR11/QCR10 and a cleavage product of UQCRFS1). This cytochrome bc1 complex then forms a dimer.</text>
</comment>
<comment type="subcellular location">
    <subcellularLocation>
        <location evidence="2">Mitochondrion inner membrane</location>
        <topology evidence="2">Multi-pass membrane protein</topology>
    </subcellularLocation>
</comment>
<comment type="miscellaneous">
    <text evidence="1">Heme 1 (or BL or b562) is low-potential and absorbs at about 562 nm, and heme 2 (or BH or b566) is high-potential and absorbs at about 566 nm.</text>
</comment>
<comment type="similarity">
    <text evidence="3 4">Belongs to the cytochrome b family.</text>
</comment>
<comment type="caution">
    <text evidence="2">The full-length protein contains only eight transmembrane helices, not nine as predicted by bioinformatics tools.</text>
</comment>